<organism>
    <name type="scientific">Arabidopsis thaliana</name>
    <name type="common">Mouse-ear cress</name>
    <dbReference type="NCBI Taxonomy" id="3702"/>
    <lineage>
        <taxon>Eukaryota</taxon>
        <taxon>Viridiplantae</taxon>
        <taxon>Streptophyta</taxon>
        <taxon>Embryophyta</taxon>
        <taxon>Tracheophyta</taxon>
        <taxon>Spermatophyta</taxon>
        <taxon>Magnoliopsida</taxon>
        <taxon>eudicotyledons</taxon>
        <taxon>Gunneridae</taxon>
        <taxon>Pentapetalae</taxon>
        <taxon>rosids</taxon>
        <taxon>malvids</taxon>
        <taxon>Brassicales</taxon>
        <taxon>Brassicaceae</taxon>
        <taxon>Camelineae</taxon>
        <taxon>Arabidopsis</taxon>
    </lineage>
</organism>
<feature type="chain" id="PRO_0000368201" description="Vacuolar protein sorting-associated protein 32 homolog 2">
    <location>
        <begin position="1"/>
        <end position="219"/>
    </location>
</feature>
<feature type="region of interest" description="Disordered" evidence="4">
    <location>
        <begin position="168"/>
        <end position="219"/>
    </location>
</feature>
<feature type="coiled-coil region" evidence="3">
    <location>
        <begin position="10"/>
        <end position="41"/>
    </location>
</feature>
<feature type="coiled-coil region" evidence="3">
    <location>
        <begin position="117"/>
        <end position="176"/>
    </location>
</feature>
<feature type="splice variant" id="VSP_036804" description="In isoform 2." evidence="11">
    <location>
        <begin position="1"/>
        <end position="27"/>
    </location>
</feature>
<sequence length="219" mass="24333">MMNRLFGKPKQEANALQTLDKLNETLEMLEKKEKVLLKKAGAEVEKAKEYSRAKNKRAAIQCLKRKRLYEGQVEQLGNFQLRIHDQMIMLEGAKATTETVDALRSGASAMKAMQKATNIDDVDKTMDEINEQTENMKQIQEALATPMGAAADFDEDELAAELDELESEELESQLLQPATTAPPLPSVPVPAGRQPARPVPQKRTAEEEELAALQAEMAL</sequence>
<name>VP322_ARATH</name>
<evidence type="ECO:0000250" key="1"/>
<evidence type="ECO:0000250" key="2">
    <source>
        <dbReference type="UniProtKB" id="Q9H444"/>
    </source>
</evidence>
<evidence type="ECO:0000255" key="3"/>
<evidence type="ECO:0000256" key="4">
    <source>
        <dbReference type="SAM" id="MobiDB-lite"/>
    </source>
</evidence>
<evidence type="ECO:0000269" key="5">
    <source>
    </source>
</evidence>
<evidence type="ECO:0000269" key="6">
    <source>
    </source>
</evidence>
<evidence type="ECO:0000269" key="7">
    <source>
    </source>
</evidence>
<evidence type="ECO:0000269" key="8">
    <source>
    </source>
</evidence>
<evidence type="ECO:0000303" key="9">
    <source>
    </source>
</evidence>
<evidence type="ECO:0000303" key="10">
    <source>
    </source>
</evidence>
<evidence type="ECO:0000305" key="11"/>
<protein>
    <recommendedName>
        <fullName>Vacuolar protein sorting-associated protein 32 homolog 2</fullName>
        <shortName>AtVPS32-2</shortName>
    </recommendedName>
    <alternativeName>
        <fullName>Charged multivesicular body protein 4 homolog 2</fullName>
    </alternativeName>
    <alternativeName>
        <fullName>ESCRT-III complex subunit VPS32 homolog 2</fullName>
    </alternativeName>
</protein>
<accession>Q9SZE4</accession>
<accession>Q3E9U7</accession>
<accession>Q8L9C3</accession>
<keyword id="KW-0025">Alternative splicing</keyword>
<keyword id="KW-0175">Coiled coil</keyword>
<keyword id="KW-0967">Endosome</keyword>
<keyword id="KW-0653">Protein transport</keyword>
<keyword id="KW-1185">Reference proteome</keyword>
<keyword id="KW-0813">Transport</keyword>
<proteinExistence type="evidence at protein level"/>
<comment type="function">
    <text evidence="1">Component of the ESCRT-III complex, which is required for multivesicular bodies (MVBs) formation and sorting of endosomal cargo proteins into MVBs. The ESCRT-III complex is probably involved in the concentration of MVB cargo (By similarity).</text>
</comment>
<comment type="subunit">
    <text evidence="2 5 6 7 8">Component of the endosomal sorting required for transport complex III (ESCRT-III), composed at least of VPS2, VPS20, VPS24 and VPS32 (By similarity). Interacts with SKD1 (PubMed:20663085, PubMed:24812106). Interacts with BRO1/ALIX (PubMed:22639582, PubMed:26342016).</text>
</comment>
<comment type="interaction">
    <interactant intactId="EBI-3865953">
        <id>Q9SZE4</id>
    </interactant>
    <interactant intactId="EBI-3865323">
        <id>Q0WTY4</id>
        <label>VPS2.2</label>
    </interactant>
    <organismsDiffer>false</organismsDiffer>
    <experiments>3</experiments>
</comment>
<comment type="interaction">
    <interactant intactId="EBI-3865953">
        <id>Q9SZE4</id>
    </interactant>
    <interactant intactId="EBI-3865360">
        <id>Q9FY89</id>
        <label>VPS20.2</label>
    </interactant>
    <organismsDiffer>false</organismsDiffer>
    <experiments>3</experiments>
</comment>
<comment type="interaction">
    <interactant intactId="EBI-3865953">
        <id>Q9SZE4</id>
    </interactant>
    <interactant intactId="EBI-3865938">
        <id>O82197</id>
        <label>VPS32.1</label>
    </interactant>
    <organismsDiffer>false</organismsDiffer>
    <experiments>4</experiments>
</comment>
<comment type="subcellular location">
    <subcellularLocation>
        <location evidence="1">Endosome</location>
    </subcellularLocation>
</comment>
<comment type="alternative products">
    <event type="alternative splicing"/>
    <isoform>
        <id>Q9SZE4-1</id>
        <name>1</name>
        <sequence type="displayed"/>
    </isoform>
    <isoform>
        <id>Q9SZE4-2</id>
        <name>2</name>
        <sequence type="described" ref="VSP_036804"/>
    </isoform>
</comment>
<comment type="similarity">
    <text evidence="11">Belongs to the SNF7 family.</text>
</comment>
<comment type="sequence caution" evidence="11">
    <conflict type="erroneous initiation">
        <sequence resource="EMBL-CDS" id="AAM66053"/>
    </conflict>
    <text>Truncated N-terminus.</text>
</comment>
<dbReference type="EMBL" id="AL078470">
    <property type="protein sequence ID" value="CAB43930.1"/>
    <property type="molecule type" value="Genomic_DNA"/>
</dbReference>
<dbReference type="EMBL" id="AL161574">
    <property type="protein sequence ID" value="CAB79674.1"/>
    <property type="molecule type" value="Genomic_DNA"/>
</dbReference>
<dbReference type="EMBL" id="CP002687">
    <property type="protein sequence ID" value="AEE85593.1"/>
    <property type="molecule type" value="Genomic_DNA"/>
</dbReference>
<dbReference type="EMBL" id="CP002687">
    <property type="protein sequence ID" value="AEE85594.1"/>
    <property type="molecule type" value="Genomic_DNA"/>
</dbReference>
<dbReference type="EMBL" id="CP002687">
    <property type="protein sequence ID" value="AEE85595.1"/>
    <property type="molecule type" value="Genomic_DNA"/>
</dbReference>
<dbReference type="EMBL" id="AY042853">
    <property type="protein sequence ID" value="AAK68793.1"/>
    <property type="molecule type" value="mRNA"/>
</dbReference>
<dbReference type="EMBL" id="AY072490">
    <property type="protein sequence ID" value="AAL66905.1"/>
    <property type="molecule type" value="mRNA"/>
</dbReference>
<dbReference type="EMBL" id="AY088519">
    <property type="protein sequence ID" value="AAM66053.1"/>
    <property type="status" value="ALT_INIT"/>
    <property type="molecule type" value="mRNA"/>
</dbReference>
<dbReference type="PIR" id="T08971">
    <property type="entry name" value="T08971"/>
</dbReference>
<dbReference type="RefSeq" id="NP_001078468.1">
    <molecule id="Q9SZE4-1"/>
    <property type="nucleotide sequence ID" value="NM_001084999.2"/>
</dbReference>
<dbReference type="RefSeq" id="NP_194645.1">
    <molecule id="Q9SZE4-1"/>
    <property type="nucleotide sequence ID" value="NM_119060.5"/>
</dbReference>
<dbReference type="RefSeq" id="NP_974635.1">
    <molecule id="Q9SZE4-2"/>
    <property type="nucleotide sequence ID" value="NM_202906.1"/>
</dbReference>
<dbReference type="SMR" id="Q9SZE4"/>
<dbReference type="BioGRID" id="14324">
    <property type="interactions" value="19"/>
</dbReference>
<dbReference type="FunCoup" id="Q9SZE4">
    <property type="interactions" value="3521"/>
</dbReference>
<dbReference type="IntAct" id="Q9SZE4">
    <property type="interactions" value="13"/>
</dbReference>
<dbReference type="STRING" id="3702.Q9SZE4"/>
<dbReference type="TCDB" id="3.A.31.1.2">
    <property type="family name" value="the endosomal sorting complexes required for transport iii (escrt-iii) family"/>
</dbReference>
<dbReference type="iPTMnet" id="Q9SZE4"/>
<dbReference type="MetOSite" id="Q9SZE4"/>
<dbReference type="PaxDb" id="3702-AT4G29160.3"/>
<dbReference type="ProteomicsDB" id="242645">
    <molecule id="Q9SZE4-1"/>
</dbReference>
<dbReference type="EnsemblPlants" id="AT4G29160.1">
    <molecule id="Q9SZE4-1"/>
    <property type="protein sequence ID" value="AT4G29160.1"/>
    <property type="gene ID" value="AT4G29160"/>
</dbReference>
<dbReference type="EnsemblPlants" id="AT4G29160.2">
    <molecule id="Q9SZE4-2"/>
    <property type="protein sequence ID" value="AT4G29160.2"/>
    <property type="gene ID" value="AT4G29160"/>
</dbReference>
<dbReference type="EnsemblPlants" id="AT4G29160.3">
    <molecule id="Q9SZE4-1"/>
    <property type="protein sequence ID" value="AT4G29160.3"/>
    <property type="gene ID" value="AT4G29160"/>
</dbReference>
<dbReference type="GeneID" id="829037"/>
<dbReference type="Gramene" id="AT4G29160.1">
    <molecule id="Q9SZE4-1"/>
    <property type="protein sequence ID" value="AT4G29160.1"/>
    <property type="gene ID" value="AT4G29160"/>
</dbReference>
<dbReference type="Gramene" id="AT4G29160.2">
    <molecule id="Q9SZE4-2"/>
    <property type="protein sequence ID" value="AT4G29160.2"/>
    <property type="gene ID" value="AT4G29160"/>
</dbReference>
<dbReference type="Gramene" id="AT4G29160.3">
    <molecule id="Q9SZE4-1"/>
    <property type="protein sequence ID" value="AT4G29160.3"/>
    <property type="gene ID" value="AT4G29160"/>
</dbReference>
<dbReference type="KEGG" id="ath:AT4G29160"/>
<dbReference type="Araport" id="AT4G29160"/>
<dbReference type="TAIR" id="AT4G29160">
    <property type="gene designation" value="SNF7.1"/>
</dbReference>
<dbReference type="eggNOG" id="KOG1656">
    <property type="taxonomic scope" value="Eukaryota"/>
</dbReference>
<dbReference type="InParanoid" id="Q9SZE4"/>
<dbReference type="OMA" id="DKIDDMM"/>
<dbReference type="PhylomeDB" id="Q9SZE4"/>
<dbReference type="PRO" id="PR:Q9SZE4"/>
<dbReference type="Proteomes" id="UP000006548">
    <property type="component" value="Chromosome 4"/>
</dbReference>
<dbReference type="ExpressionAtlas" id="Q9SZE4">
    <property type="expression patterns" value="baseline and differential"/>
</dbReference>
<dbReference type="GO" id="GO:0000815">
    <property type="term" value="C:ESCRT III complex"/>
    <property type="evidence" value="ECO:0000250"/>
    <property type="project" value="TAIR"/>
</dbReference>
<dbReference type="GO" id="GO:0005886">
    <property type="term" value="C:plasma membrane"/>
    <property type="evidence" value="ECO:0007005"/>
    <property type="project" value="TAIR"/>
</dbReference>
<dbReference type="GO" id="GO:0070676">
    <property type="term" value="P:intralumenal vesicle formation"/>
    <property type="evidence" value="ECO:0000314"/>
    <property type="project" value="TAIR"/>
</dbReference>
<dbReference type="GO" id="GO:0015031">
    <property type="term" value="P:protein transport"/>
    <property type="evidence" value="ECO:0007669"/>
    <property type="project" value="UniProtKB-KW"/>
</dbReference>
<dbReference type="GO" id="GO:0007034">
    <property type="term" value="P:vacuolar transport"/>
    <property type="evidence" value="ECO:0007669"/>
    <property type="project" value="InterPro"/>
</dbReference>
<dbReference type="Gene3D" id="6.10.250.1710">
    <property type="match status" value="1"/>
</dbReference>
<dbReference type="Gene3D" id="1.10.287.1060">
    <property type="entry name" value="ESAT-6-like"/>
    <property type="match status" value="1"/>
</dbReference>
<dbReference type="InterPro" id="IPR005024">
    <property type="entry name" value="Snf7_fam"/>
</dbReference>
<dbReference type="PANTHER" id="PTHR22761">
    <property type="entry name" value="CHARGED MULTIVESICULAR BODY PROTEIN"/>
    <property type="match status" value="1"/>
</dbReference>
<dbReference type="PANTHER" id="PTHR22761:SF75">
    <property type="entry name" value="VACUOLAR PROTEIN SORTING-ASSOCIATED PROTEIN 32 HOMOLOG 2"/>
    <property type="match status" value="1"/>
</dbReference>
<dbReference type="Pfam" id="PF03357">
    <property type="entry name" value="Snf7"/>
    <property type="match status" value="1"/>
</dbReference>
<reference key="1">
    <citation type="journal article" date="1999" name="Nature">
        <title>Sequence and analysis of chromosome 4 of the plant Arabidopsis thaliana.</title>
        <authorList>
            <person name="Mayer K.F.X."/>
            <person name="Schueller C."/>
            <person name="Wambutt R."/>
            <person name="Murphy G."/>
            <person name="Volckaert G."/>
            <person name="Pohl T."/>
            <person name="Duesterhoeft A."/>
            <person name="Stiekema W."/>
            <person name="Entian K.-D."/>
            <person name="Terryn N."/>
            <person name="Harris B."/>
            <person name="Ansorge W."/>
            <person name="Brandt P."/>
            <person name="Grivell L.A."/>
            <person name="Rieger M."/>
            <person name="Weichselgartner M."/>
            <person name="de Simone V."/>
            <person name="Obermaier B."/>
            <person name="Mache R."/>
            <person name="Mueller M."/>
            <person name="Kreis M."/>
            <person name="Delseny M."/>
            <person name="Puigdomenech P."/>
            <person name="Watson M."/>
            <person name="Schmidtheini T."/>
            <person name="Reichert B."/>
            <person name="Portetelle D."/>
            <person name="Perez-Alonso M."/>
            <person name="Boutry M."/>
            <person name="Bancroft I."/>
            <person name="Vos P."/>
            <person name="Hoheisel J."/>
            <person name="Zimmermann W."/>
            <person name="Wedler H."/>
            <person name="Ridley P."/>
            <person name="Langham S.-A."/>
            <person name="McCullagh B."/>
            <person name="Bilham L."/>
            <person name="Robben J."/>
            <person name="van der Schueren J."/>
            <person name="Grymonprez B."/>
            <person name="Chuang Y.-J."/>
            <person name="Vandenbussche F."/>
            <person name="Braeken M."/>
            <person name="Weltjens I."/>
            <person name="Voet M."/>
            <person name="Bastiaens I."/>
            <person name="Aert R."/>
            <person name="Defoor E."/>
            <person name="Weitzenegger T."/>
            <person name="Bothe G."/>
            <person name="Ramsperger U."/>
            <person name="Hilbert H."/>
            <person name="Braun M."/>
            <person name="Holzer E."/>
            <person name="Brandt A."/>
            <person name="Peters S."/>
            <person name="van Staveren M."/>
            <person name="Dirkse W."/>
            <person name="Mooijman P."/>
            <person name="Klein Lankhorst R."/>
            <person name="Rose M."/>
            <person name="Hauf J."/>
            <person name="Koetter P."/>
            <person name="Berneiser S."/>
            <person name="Hempel S."/>
            <person name="Feldpausch M."/>
            <person name="Lamberth S."/>
            <person name="Van den Daele H."/>
            <person name="De Keyser A."/>
            <person name="Buysshaert C."/>
            <person name="Gielen J."/>
            <person name="Villarroel R."/>
            <person name="De Clercq R."/>
            <person name="van Montagu M."/>
            <person name="Rogers J."/>
            <person name="Cronin A."/>
            <person name="Quail M.A."/>
            <person name="Bray-Allen S."/>
            <person name="Clark L."/>
            <person name="Doggett J."/>
            <person name="Hall S."/>
            <person name="Kay M."/>
            <person name="Lennard N."/>
            <person name="McLay K."/>
            <person name="Mayes R."/>
            <person name="Pettett A."/>
            <person name="Rajandream M.A."/>
            <person name="Lyne M."/>
            <person name="Benes V."/>
            <person name="Rechmann S."/>
            <person name="Borkova D."/>
            <person name="Bloecker H."/>
            <person name="Scharfe M."/>
            <person name="Grimm M."/>
            <person name="Loehnert T.-H."/>
            <person name="Dose S."/>
            <person name="de Haan M."/>
            <person name="Maarse A.C."/>
            <person name="Schaefer M."/>
            <person name="Mueller-Auer S."/>
            <person name="Gabel C."/>
            <person name="Fuchs M."/>
            <person name="Fartmann B."/>
            <person name="Granderath K."/>
            <person name="Dauner D."/>
            <person name="Herzl A."/>
            <person name="Neumann S."/>
            <person name="Argiriou A."/>
            <person name="Vitale D."/>
            <person name="Liguori R."/>
            <person name="Piravandi E."/>
            <person name="Massenet O."/>
            <person name="Quigley F."/>
            <person name="Clabauld G."/>
            <person name="Muendlein A."/>
            <person name="Felber R."/>
            <person name="Schnabl S."/>
            <person name="Hiller R."/>
            <person name="Schmidt W."/>
            <person name="Lecharny A."/>
            <person name="Aubourg S."/>
            <person name="Chefdor F."/>
            <person name="Cooke R."/>
            <person name="Berger C."/>
            <person name="Monfort A."/>
            <person name="Casacuberta E."/>
            <person name="Gibbons T."/>
            <person name="Weber N."/>
            <person name="Vandenbol M."/>
            <person name="Bargues M."/>
            <person name="Terol J."/>
            <person name="Torres A."/>
            <person name="Perez-Perez A."/>
            <person name="Purnelle B."/>
            <person name="Bent E."/>
            <person name="Johnson S."/>
            <person name="Tacon D."/>
            <person name="Jesse T."/>
            <person name="Heijnen L."/>
            <person name="Schwarz S."/>
            <person name="Scholler P."/>
            <person name="Heber S."/>
            <person name="Francs P."/>
            <person name="Bielke C."/>
            <person name="Frishman D."/>
            <person name="Haase D."/>
            <person name="Lemcke K."/>
            <person name="Mewes H.-W."/>
            <person name="Stocker S."/>
            <person name="Zaccaria P."/>
            <person name="Bevan M."/>
            <person name="Wilson R.K."/>
            <person name="de la Bastide M."/>
            <person name="Habermann K."/>
            <person name="Parnell L."/>
            <person name="Dedhia N."/>
            <person name="Gnoj L."/>
            <person name="Schutz K."/>
            <person name="Huang E."/>
            <person name="Spiegel L."/>
            <person name="Sekhon M."/>
            <person name="Murray J."/>
            <person name="Sheet P."/>
            <person name="Cordes M."/>
            <person name="Abu-Threideh J."/>
            <person name="Stoneking T."/>
            <person name="Kalicki J."/>
            <person name="Graves T."/>
            <person name="Harmon G."/>
            <person name="Edwards J."/>
            <person name="Latreille P."/>
            <person name="Courtney L."/>
            <person name="Cloud J."/>
            <person name="Abbott A."/>
            <person name="Scott K."/>
            <person name="Johnson D."/>
            <person name="Minx P."/>
            <person name="Bentley D."/>
            <person name="Fulton B."/>
            <person name="Miller N."/>
            <person name="Greco T."/>
            <person name="Kemp K."/>
            <person name="Kramer J."/>
            <person name="Fulton L."/>
            <person name="Mardis E."/>
            <person name="Dante M."/>
            <person name="Pepin K."/>
            <person name="Hillier L.W."/>
            <person name="Nelson J."/>
            <person name="Spieth J."/>
            <person name="Ryan E."/>
            <person name="Andrews S."/>
            <person name="Geisel C."/>
            <person name="Layman D."/>
            <person name="Du H."/>
            <person name="Ali J."/>
            <person name="Berghoff A."/>
            <person name="Jones K."/>
            <person name="Drone K."/>
            <person name="Cotton M."/>
            <person name="Joshu C."/>
            <person name="Antonoiu B."/>
            <person name="Zidanic M."/>
            <person name="Strong C."/>
            <person name="Sun H."/>
            <person name="Lamar B."/>
            <person name="Yordan C."/>
            <person name="Ma P."/>
            <person name="Zhong J."/>
            <person name="Preston R."/>
            <person name="Vil D."/>
            <person name="Shekher M."/>
            <person name="Matero A."/>
            <person name="Shah R."/>
            <person name="Swaby I.K."/>
            <person name="O'Shaughnessy A."/>
            <person name="Rodriguez M."/>
            <person name="Hoffman J."/>
            <person name="Till S."/>
            <person name="Granat S."/>
            <person name="Shohdy N."/>
            <person name="Hasegawa A."/>
            <person name="Hameed A."/>
            <person name="Lodhi M."/>
            <person name="Johnson A."/>
            <person name="Chen E."/>
            <person name="Marra M.A."/>
            <person name="Martienssen R."/>
            <person name="McCombie W.R."/>
        </authorList>
    </citation>
    <scope>NUCLEOTIDE SEQUENCE [LARGE SCALE GENOMIC DNA]</scope>
    <source>
        <strain>cv. Columbia</strain>
    </source>
</reference>
<reference key="2">
    <citation type="journal article" date="2017" name="Plant J.">
        <title>Araport11: a complete reannotation of the Arabidopsis thaliana reference genome.</title>
        <authorList>
            <person name="Cheng C.Y."/>
            <person name="Krishnakumar V."/>
            <person name="Chan A.P."/>
            <person name="Thibaud-Nissen F."/>
            <person name="Schobel S."/>
            <person name="Town C.D."/>
        </authorList>
    </citation>
    <scope>GENOME REANNOTATION</scope>
    <source>
        <strain>cv. Columbia</strain>
    </source>
</reference>
<reference key="3">
    <citation type="journal article" date="2003" name="Science">
        <title>Empirical analysis of transcriptional activity in the Arabidopsis genome.</title>
        <authorList>
            <person name="Yamada K."/>
            <person name="Lim J."/>
            <person name="Dale J.M."/>
            <person name="Chen H."/>
            <person name="Shinn P."/>
            <person name="Palm C.J."/>
            <person name="Southwick A.M."/>
            <person name="Wu H.C."/>
            <person name="Kim C.J."/>
            <person name="Nguyen M."/>
            <person name="Pham P.K."/>
            <person name="Cheuk R.F."/>
            <person name="Karlin-Newmann G."/>
            <person name="Liu S.X."/>
            <person name="Lam B."/>
            <person name="Sakano H."/>
            <person name="Wu T."/>
            <person name="Yu G."/>
            <person name="Miranda M."/>
            <person name="Quach H.L."/>
            <person name="Tripp M."/>
            <person name="Chang C.H."/>
            <person name="Lee J.M."/>
            <person name="Toriumi M.J."/>
            <person name="Chan M.M."/>
            <person name="Tang C.C."/>
            <person name="Onodera C.S."/>
            <person name="Deng J.M."/>
            <person name="Akiyama K."/>
            <person name="Ansari Y."/>
            <person name="Arakawa T."/>
            <person name="Banh J."/>
            <person name="Banno F."/>
            <person name="Bowser L."/>
            <person name="Brooks S.Y."/>
            <person name="Carninci P."/>
            <person name="Chao Q."/>
            <person name="Choy N."/>
            <person name="Enju A."/>
            <person name="Goldsmith A.D."/>
            <person name="Gurjal M."/>
            <person name="Hansen N.F."/>
            <person name="Hayashizaki Y."/>
            <person name="Johnson-Hopson C."/>
            <person name="Hsuan V.W."/>
            <person name="Iida K."/>
            <person name="Karnes M."/>
            <person name="Khan S."/>
            <person name="Koesema E."/>
            <person name="Ishida J."/>
            <person name="Jiang P.X."/>
            <person name="Jones T."/>
            <person name="Kawai J."/>
            <person name="Kamiya A."/>
            <person name="Meyers C."/>
            <person name="Nakajima M."/>
            <person name="Narusaka M."/>
            <person name="Seki M."/>
            <person name="Sakurai T."/>
            <person name="Satou M."/>
            <person name="Tamse R."/>
            <person name="Vaysberg M."/>
            <person name="Wallender E.K."/>
            <person name="Wong C."/>
            <person name="Yamamura Y."/>
            <person name="Yuan S."/>
            <person name="Shinozaki K."/>
            <person name="Davis R.W."/>
            <person name="Theologis A."/>
            <person name="Ecker J.R."/>
        </authorList>
    </citation>
    <scope>NUCLEOTIDE SEQUENCE [LARGE SCALE MRNA] (ISOFORM 1)</scope>
    <source>
        <strain>cv. Columbia</strain>
    </source>
</reference>
<reference key="4">
    <citation type="submission" date="2002-03" db="EMBL/GenBank/DDBJ databases">
        <title>Full-length cDNA from Arabidopsis thaliana.</title>
        <authorList>
            <person name="Brover V.V."/>
            <person name="Troukhan M.E."/>
            <person name="Alexandrov N.A."/>
            <person name="Lu Y.-P."/>
            <person name="Flavell R.B."/>
            <person name="Feldmann K.A."/>
        </authorList>
    </citation>
    <scope>NUCLEOTIDE SEQUENCE [LARGE SCALE MRNA] (ISOFORM 1)</scope>
</reference>
<reference key="5">
    <citation type="journal article" date="2006" name="Development">
        <title>The Arabidopsis elch mutant reveals functions of an ESCRT component in cytokinesis.</title>
        <authorList>
            <person name="Spitzer C."/>
            <person name="Schellmann S."/>
            <person name="Sabovljevic A."/>
            <person name="Shahriari M."/>
            <person name="Keshavaiah C."/>
            <person name="Bechtold N."/>
            <person name="Herzog M."/>
            <person name="Mueller S."/>
            <person name="Hanisch F.-G."/>
            <person name="Huelskamp M."/>
        </authorList>
    </citation>
    <scope>IDENTIFICATION</scope>
    <scope>NOMENCLATURE</scope>
</reference>
<reference key="6">
    <citation type="journal article" date="2006" name="Trends Plant Sci.">
        <title>Exploring the ESCRTing machinery in eukaryotes.</title>
        <authorList>
            <person name="Winter V."/>
            <person name="Hauser M.-T."/>
        </authorList>
    </citation>
    <scope>IDENTIFICATION</scope>
</reference>
<reference key="7">
    <citation type="journal article" date="2010" name="Plant J.">
        <title>The AAA-type ATPase AtSKD1 contributes to vacuolar maintenance of Arabidopsis thaliana.</title>
        <authorList>
            <person name="Shahriari M."/>
            <person name="Keshavaiah C."/>
            <person name="Scheuring D."/>
            <person name="Sabovljevic A."/>
            <person name="Pimpl P."/>
            <person name="Haeusler R.E."/>
            <person name="Huelskamp M."/>
            <person name="Schellmann S."/>
        </authorList>
    </citation>
    <scope>INTERACTION WITH SKD1</scope>
    <source>
        <strain>cv. Columbia</strain>
    </source>
</reference>
<reference key="8">
    <citation type="journal article" date="2011" name="Front. Plant Sci.">
        <title>Protein-protein interaction network and subcellular localization of the Arabidopsis thaliana ESCRT machinery.</title>
        <authorList>
            <person name="Richardson L.G."/>
            <person name="Howard A.S."/>
            <person name="Khuu N."/>
            <person name="Gidda S.K."/>
            <person name="McCartney A."/>
            <person name="Morphy B.J."/>
            <person name="Mullen R.T."/>
        </authorList>
    </citation>
    <scope>NOMENCLATURE</scope>
    <scope>INTERACTION WITH BRO1</scope>
</reference>
<reference key="9">
    <citation type="journal article" date="2014" name="Plant Physiol.">
        <title>The Arabidopsis endosomal sorting complex required for transport III regulates internal vesicle formation of the prevacuolar compartment and is required for plant development.</title>
        <authorList>
            <person name="Cai Y."/>
            <person name="Zhuang X."/>
            <person name="Gao C."/>
            <person name="Wang X."/>
            <person name="Jiang L."/>
        </authorList>
    </citation>
    <scope>INTERACTION WITH SKD1</scope>
    <scope>REVIEW ON ESCRT-III</scope>
</reference>
<reference key="10">
    <citation type="journal article" date="2015" name="Plant Cell">
        <title>ESCRT-III-associated protein ALIX mediates high-affinity phosphate transporter trafficking to maintain phosphate homeostasis in Arabidopsis.</title>
        <authorList>
            <person name="Cardona-Lopez X."/>
            <person name="Cuyas L."/>
            <person name="Marin E."/>
            <person name="Rajulu C."/>
            <person name="Irigoyen M.L."/>
            <person name="Gil E."/>
            <person name="Puga M.I."/>
            <person name="Bligny R."/>
            <person name="Nussaume L."/>
            <person name="Geldner N."/>
            <person name="Paz-Ares J."/>
            <person name="Rubio V."/>
        </authorList>
    </citation>
    <scope>INTERACTION WITH BRO1</scope>
</reference>
<gene>
    <name type="primary">VPS32.2</name>
    <name type="synonym">CHMP4-2</name>
    <name evidence="10" type="synonym">SNF7.1</name>
    <name evidence="9" type="synonym">SNF7B</name>
    <name type="ordered locus">At4g29160</name>
    <name type="ORF">F19B15.190</name>
</gene>